<accession>Q0BMM2</accession>
<organism>
    <name type="scientific">Francisella tularensis subsp. holarctica (strain OSU18)</name>
    <dbReference type="NCBI Taxonomy" id="393011"/>
    <lineage>
        <taxon>Bacteria</taxon>
        <taxon>Pseudomonadati</taxon>
        <taxon>Pseudomonadota</taxon>
        <taxon>Gammaproteobacteria</taxon>
        <taxon>Thiotrichales</taxon>
        <taxon>Francisellaceae</taxon>
        <taxon>Francisella</taxon>
    </lineage>
</organism>
<evidence type="ECO:0000255" key="1">
    <source>
        <dbReference type="HAMAP-Rule" id="MF_01161"/>
    </source>
</evidence>
<keyword id="KW-0067">ATP-binding</keyword>
<keyword id="KW-0963">Cytoplasm</keyword>
<keyword id="KW-0436">Ligase</keyword>
<keyword id="KW-0547">Nucleotide-binding</keyword>
<keyword id="KW-0819">tRNA processing</keyword>
<sequence>MSISKSLVLNEIKKFSPSHIIIGYSGGVDSSVLLNISKELDIPLIAIYINHNLHRDSLKWQIHCQQTCQKYNLQFISHSLDKVPKGESFEAWASKQRMAFFQKIMQQYSKPLLLLGHHQDDQAETFLIQAIRGSGLAGLASIPHYKELHHGGVLRPLLKYSKIDIEGFAKLNNISYIYDDSNEDIKYRRNLIRNQIIPILQQVNPNISQTLSRSANICAESNNILQKLLTERLQSISQDTNLIISELIKLDDDIQKNLLHLWFKQNTQQSLKSKQIKELHLAVNNPSTGWQIDISNYYQIHIQYNQLIIKYPTTINDISKEDIISWLSKNLNEEIDLTKIVIRDRKPDDKCKYRGRNKPNKLKILFQELQIPTTERSKAKIILKDQQIIAVYPFFICG</sequence>
<protein>
    <recommendedName>
        <fullName evidence="1">tRNA(Ile)-lysidine synthase</fullName>
        <ecNumber evidence="1">6.3.4.19</ecNumber>
    </recommendedName>
    <alternativeName>
        <fullName evidence="1">tRNA(Ile)-2-lysyl-cytidine synthase</fullName>
    </alternativeName>
    <alternativeName>
        <fullName evidence="1">tRNA(Ile)-lysidine synthetase</fullName>
    </alternativeName>
</protein>
<gene>
    <name evidence="1" type="primary">tilS</name>
    <name type="ordered locus">FTH_0715</name>
</gene>
<dbReference type="EC" id="6.3.4.19" evidence="1"/>
<dbReference type="EMBL" id="CP000437">
    <property type="protein sequence ID" value="ABI82662.1"/>
    <property type="molecule type" value="Genomic_DNA"/>
</dbReference>
<dbReference type="RefSeq" id="WP_010032774.1">
    <property type="nucleotide sequence ID" value="NC_017463.1"/>
</dbReference>
<dbReference type="SMR" id="Q0BMM2"/>
<dbReference type="KEGG" id="fth:FTH_0715"/>
<dbReference type="GO" id="GO:0005737">
    <property type="term" value="C:cytoplasm"/>
    <property type="evidence" value="ECO:0007669"/>
    <property type="project" value="UniProtKB-SubCell"/>
</dbReference>
<dbReference type="GO" id="GO:0005524">
    <property type="term" value="F:ATP binding"/>
    <property type="evidence" value="ECO:0007669"/>
    <property type="project" value="UniProtKB-UniRule"/>
</dbReference>
<dbReference type="GO" id="GO:0032267">
    <property type="term" value="F:tRNA(Ile)-lysidine synthase activity"/>
    <property type="evidence" value="ECO:0007669"/>
    <property type="project" value="UniProtKB-EC"/>
</dbReference>
<dbReference type="GO" id="GO:0006400">
    <property type="term" value="P:tRNA modification"/>
    <property type="evidence" value="ECO:0007669"/>
    <property type="project" value="UniProtKB-UniRule"/>
</dbReference>
<dbReference type="CDD" id="cd01992">
    <property type="entry name" value="TilS_N"/>
    <property type="match status" value="1"/>
</dbReference>
<dbReference type="Gene3D" id="3.40.50.620">
    <property type="entry name" value="HUPs"/>
    <property type="match status" value="1"/>
</dbReference>
<dbReference type="HAMAP" id="MF_01161">
    <property type="entry name" value="tRNA_Ile_lys_synt"/>
    <property type="match status" value="1"/>
</dbReference>
<dbReference type="InterPro" id="IPR012796">
    <property type="entry name" value="Lysidine-tRNA-synth_C"/>
</dbReference>
<dbReference type="InterPro" id="IPR014729">
    <property type="entry name" value="Rossmann-like_a/b/a_fold"/>
</dbReference>
<dbReference type="InterPro" id="IPR011063">
    <property type="entry name" value="TilS/TtcA_N"/>
</dbReference>
<dbReference type="InterPro" id="IPR012094">
    <property type="entry name" value="tRNA_Ile_lys_synt"/>
</dbReference>
<dbReference type="InterPro" id="IPR012795">
    <property type="entry name" value="tRNA_Ile_lys_synt_N"/>
</dbReference>
<dbReference type="InterPro" id="IPR015262">
    <property type="entry name" value="tRNA_Ile_lys_synt_subst-bd"/>
</dbReference>
<dbReference type="NCBIfam" id="TIGR02433">
    <property type="entry name" value="lysidine_TilS_C"/>
    <property type="match status" value="1"/>
</dbReference>
<dbReference type="NCBIfam" id="TIGR02432">
    <property type="entry name" value="lysidine_TilS_N"/>
    <property type="match status" value="1"/>
</dbReference>
<dbReference type="PANTHER" id="PTHR43033">
    <property type="entry name" value="TRNA(ILE)-LYSIDINE SYNTHASE-RELATED"/>
    <property type="match status" value="1"/>
</dbReference>
<dbReference type="PANTHER" id="PTHR43033:SF1">
    <property type="entry name" value="TRNA(ILE)-LYSIDINE SYNTHASE-RELATED"/>
    <property type="match status" value="1"/>
</dbReference>
<dbReference type="Pfam" id="PF01171">
    <property type="entry name" value="ATP_bind_3"/>
    <property type="match status" value="1"/>
</dbReference>
<dbReference type="Pfam" id="PF09179">
    <property type="entry name" value="TilS"/>
    <property type="match status" value="1"/>
</dbReference>
<dbReference type="Pfam" id="PF11734">
    <property type="entry name" value="TilS_C"/>
    <property type="match status" value="1"/>
</dbReference>
<dbReference type="SMART" id="SM00977">
    <property type="entry name" value="TilS_C"/>
    <property type="match status" value="1"/>
</dbReference>
<dbReference type="SUPFAM" id="SSF52402">
    <property type="entry name" value="Adenine nucleotide alpha hydrolases-like"/>
    <property type="match status" value="1"/>
</dbReference>
<dbReference type="SUPFAM" id="SSF82829">
    <property type="entry name" value="MesJ substrate recognition domain-like"/>
    <property type="match status" value="1"/>
</dbReference>
<dbReference type="SUPFAM" id="SSF56037">
    <property type="entry name" value="PheT/TilS domain"/>
    <property type="match status" value="1"/>
</dbReference>
<reference key="1">
    <citation type="journal article" date="2006" name="J. Bacteriol.">
        <title>Chromosome rearrangement and diversification of Francisella tularensis revealed by the type B (OSU18) genome sequence.</title>
        <authorList>
            <person name="Petrosino J.F."/>
            <person name="Xiang Q."/>
            <person name="Karpathy S.E."/>
            <person name="Jiang H."/>
            <person name="Yerrapragada S."/>
            <person name="Liu Y."/>
            <person name="Gioia J."/>
            <person name="Hemphill L."/>
            <person name="Gonzalez A."/>
            <person name="Raghavan T.M."/>
            <person name="Uzman A."/>
            <person name="Fox G.E."/>
            <person name="Highlander S."/>
            <person name="Reichard M."/>
            <person name="Morton R.J."/>
            <person name="Clinkenbeard K.D."/>
            <person name="Weinstock G.M."/>
        </authorList>
    </citation>
    <scope>NUCLEOTIDE SEQUENCE [LARGE SCALE GENOMIC DNA]</scope>
    <source>
        <strain>OSU18</strain>
    </source>
</reference>
<proteinExistence type="inferred from homology"/>
<comment type="function">
    <text evidence="1">Ligates lysine onto the cytidine present at position 34 of the AUA codon-specific tRNA(Ile) that contains the anticodon CAU, in an ATP-dependent manner. Cytidine is converted to lysidine, thus changing the amino acid specificity of the tRNA from methionine to isoleucine.</text>
</comment>
<comment type="catalytic activity">
    <reaction evidence="1">
        <text>cytidine(34) in tRNA(Ile2) + L-lysine + ATP = lysidine(34) in tRNA(Ile2) + AMP + diphosphate + H(+)</text>
        <dbReference type="Rhea" id="RHEA:43744"/>
        <dbReference type="Rhea" id="RHEA-COMP:10625"/>
        <dbReference type="Rhea" id="RHEA-COMP:10670"/>
        <dbReference type="ChEBI" id="CHEBI:15378"/>
        <dbReference type="ChEBI" id="CHEBI:30616"/>
        <dbReference type="ChEBI" id="CHEBI:32551"/>
        <dbReference type="ChEBI" id="CHEBI:33019"/>
        <dbReference type="ChEBI" id="CHEBI:82748"/>
        <dbReference type="ChEBI" id="CHEBI:83665"/>
        <dbReference type="ChEBI" id="CHEBI:456215"/>
        <dbReference type="EC" id="6.3.4.19"/>
    </reaction>
</comment>
<comment type="subcellular location">
    <subcellularLocation>
        <location evidence="1">Cytoplasm</location>
    </subcellularLocation>
</comment>
<comment type="domain">
    <text>The N-terminal region contains the highly conserved SGGXDS motif, predicted to be a P-loop motif involved in ATP binding.</text>
</comment>
<comment type="similarity">
    <text evidence="1">Belongs to the tRNA(Ile)-lysidine synthase family.</text>
</comment>
<name>TILS_FRATO</name>
<feature type="chain" id="PRO_1000065614" description="tRNA(Ile)-lysidine synthase">
    <location>
        <begin position="1"/>
        <end position="398"/>
    </location>
</feature>
<feature type="binding site" evidence="1">
    <location>
        <begin position="25"/>
        <end position="30"/>
    </location>
    <ligand>
        <name>ATP</name>
        <dbReference type="ChEBI" id="CHEBI:30616"/>
    </ligand>
</feature>